<gene>
    <name evidence="1" type="primary">kdpC</name>
    <name type="ordered locus">Pnap_3602</name>
</gene>
<organism>
    <name type="scientific">Polaromonas naphthalenivorans (strain CJ2)</name>
    <dbReference type="NCBI Taxonomy" id="365044"/>
    <lineage>
        <taxon>Bacteria</taxon>
        <taxon>Pseudomonadati</taxon>
        <taxon>Pseudomonadota</taxon>
        <taxon>Betaproteobacteria</taxon>
        <taxon>Burkholderiales</taxon>
        <taxon>Comamonadaceae</taxon>
        <taxon>Polaromonas</taxon>
    </lineage>
</organism>
<accession>A1VTC0</accession>
<dbReference type="EMBL" id="CP000529">
    <property type="protein sequence ID" value="ABM38898.1"/>
    <property type="molecule type" value="Genomic_DNA"/>
</dbReference>
<dbReference type="RefSeq" id="WP_011802968.1">
    <property type="nucleotide sequence ID" value="NC_008781.1"/>
</dbReference>
<dbReference type="SMR" id="A1VTC0"/>
<dbReference type="STRING" id="365044.Pnap_3602"/>
<dbReference type="KEGG" id="pna:Pnap_3602"/>
<dbReference type="eggNOG" id="COG2156">
    <property type="taxonomic scope" value="Bacteria"/>
</dbReference>
<dbReference type="HOGENOM" id="CLU_077094_2_0_4"/>
<dbReference type="OrthoDB" id="9788285at2"/>
<dbReference type="Proteomes" id="UP000000644">
    <property type="component" value="Chromosome"/>
</dbReference>
<dbReference type="GO" id="GO:0005886">
    <property type="term" value="C:plasma membrane"/>
    <property type="evidence" value="ECO:0007669"/>
    <property type="project" value="UniProtKB-SubCell"/>
</dbReference>
<dbReference type="GO" id="GO:0005524">
    <property type="term" value="F:ATP binding"/>
    <property type="evidence" value="ECO:0007669"/>
    <property type="project" value="UniProtKB-UniRule"/>
</dbReference>
<dbReference type="GO" id="GO:0008556">
    <property type="term" value="F:P-type potassium transmembrane transporter activity"/>
    <property type="evidence" value="ECO:0007669"/>
    <property type="project" value="InterPro"/>
</dbReference>
<dbReference type="HAMAP" id="MF_00276">
    <property type="entry name" value="KdpC"/>
    <property type="match status" value="1"/>
</dbReference>
<dbReference type="InterPro" id="IPR003820">
    <property type="entry name" value="KdpC"/>
</dbReference>
<dbReference type="NCBIfam" id="TIGR00681">
    <property type="entry name" value="kdpC"/>
    <property type="match status" value="1"/>
</dbReference>
<dbReference type="NCBIfam" id="NF001454">
    <property type="entry name" value="PRK00315.1"/>
    <property type="match status" value="1"/>
</dbReference>
<dbReference type="PANTHER" id="PTHR30042">
    <property type="entry name" value="POTASSIUM-TRANSPORTING ATPASE C CHAIN"/>
    <property type="match status" value="1"/>
</dbReference>
<dbReference type="PANTHER" id="PTHR30042:SF2">
    <property type="entry name" value="POTASSIUM-TRANSPORTING ATPASE KDPC SUBUNIT"/>
    <property type="match status" value="1"/>
</dbReference>
<dbReference type="Pfam" id="PF02669">
    <property type="entry name" value="KdpC"/>
    <property type="match status" value="1"/>
</dbReference>
<dbReference type="PIRSF" id="PIRSF001296">
    <property type="entry name" value="K_ATPase_KdpC"/>
    <property type="match status" value="1"/>
</dbReference>
<sequence>MKNILRPALVLFFVLTLLTGVAYPLAVTGAAQLLFPAQAAGSLILRDGKPVGSSLIGQNFTDPGHFWGRPSATGPMPYNASASGGSNLGPLNPALLDAVKGRIDALRAADPGNAAAVPVDLVTASASGLDPHISPAAASYQAARVARVRGLPLEKVRQLVAQETETPWLGLLGEARVHVLKLNLALDALKPVNAPG</sequence>
<proteinExistence type="inferred from homology"/>
<keyword id="KW-0067">ATP-binding</keyword>
<keyword id="KW-0997">Cell inner membrane</keyword>
<keyword id="KW-1003">Cell membrane</keyword>
<keyword id="KW-0406">Ion transport</keyword>
<keyword id="KW-0472">Membrane</keyword>
<keyword id="KW-0547">Nucleotide-binding</keyword>
<keyword id="KW-0630">Potassium</keyword>
<keyword id="KW-0633">Potassium transport</keyword>
<keyword id="KW-1185">Reference proteome</keyword>
<keyword id="KW-0812">Transmembrane</keyword>
<keyword id="KW-1133">Transmembrane helix</keyword>
<keyword id="KW-0813">Transport</keyword>
<evidence type="ECO:0000255" key="1">
    <source>
        <dbReference type="HAMAP-Rule" id="MF_00276"/>
    </source>
</evidence>
<name>KDPC_POLNA</name>
<reference key="1">
    <citation type="journal article" date="2009" name="Environ. Microbiol.">
        <title>The genome of Polaromonas naphthalenivorans strain CJ2, isolated from coal tar-contaminated sediment, reveals physiological and metabolic versatility and evolution through extensive horizontal gene transfer.</title>
        <authorList>
            <person name="Yagi J.M."/>
            <person name="Sims D."/>
            <person name="Brettin T."/>
            <person name="Bruce D."/>
            <person name="Madsen E.L."/>
        </authorList>
    </citation>
    <scope>NUCLEOTIDE SEQUENCE [LARGE SCALE GENOMIC DNA]</scope>
    <source>
        <strain>CJ2</strain>
    </source>
</reference>
<feature type="chain" id="PRO_1000022301" description="Potassium-transporting ATPase KdpC subunit">
    <location>
        <begin position="1"/>
        <end position="196"/>
    </location>
</feature>
<feature type="transmembrane region" description="Helical" evidence="1">
    <location>
        <begin position="7"/>
        <end position="27"/>
    </location>
</feature>
<comment type="function">
    <text evidence="1">Part of the high-affinity ATP-driven potassium transport (or Kdp) system, which catalyzes the hydrolysis of ATP coupled with the electrogenic transport of potassium into the cytoplasm. This subunit acts as a catalytic chaperone that increases the ATP-binding affinity of the ATP-hydrolyzing subunit KdpB by the formation of a transient KdpB/KdpC/ATP ternary complex.</text>
</comment>
<comment type="subunit">
    <text evidence="1">The system is composed of three essential subunits: KdpA, KdpB and KdpC.</text>
</comment>
<comment type="subcellular location">
    <subcellularLocation>
        <location evidence="1">Cell inner membrane</location>
        <topology evidence="1">Single-pass membrane protein</topology>
    </subcellularLocation>
</comment>
<comment type="similarity">
    <text evidence="1">Belongs to the KdpC family.</text>
</comment>
<protein>
    <recommendedName>
        <fullName evidence="1">Potassium-transporting ATPase KdpC subunit</fullName>
    </recommendedName>
    <alternativeName>
        <fullName evidence="1">ATP phosphohydrolase [potassium-transporting] C chain</fullName>
    </alternativeName>
    <alternativeName>
        <fullName evidence="1">Potassium-binding and translocating subunit C</fullName>
    </alternativeName>
    <alternativeName>
        <fullName evidence="1">Potassium-translocating ATPase C chain</fullName>
    </alternativeName>
</protein>